<evidence type="ECO:0000255" key="1">
    <source>
        <dbReference type="HAMAP-Rule" id="MF_01702"/>
    </source>
</evidence>
<name>PSTB_SPIKU</name>
<reference key="1">
    <citation type="journal article" date="2003" name="Mol. Genet. Genomics">
        <title>Gene content and organization of an 85-kb DNA segment from the genome of the phytopathogenic mollicute Spiroplasma kunkelii.</title>
        <authorList>
            <person name="Zhao Y."/>
            <person name="Hammond R.W."/>
            <person name="Jomantiene R."/>
            <person name="Dally E.L."/>
            <person name="Lee I.-M."/>
            <person name="Jia H."/>
            <person name="Wu H."/>
            <person name="Lin S."/>
            <person name="Zhang P."/>
            <person name="Kenton S."/>
            <person name="Najar F.Z."/>
            <person name="Hua A."/>
            <person name="Roe B.A."/>
            <person name="Fletcher J."/>
            <person name="Davis R.E."/>
        </authorList>
    </citation>
    <scope>NUCLEOTIDE SEQUENCE [GENOMIC DNA]</scope>
    <source>
        <strain>CR2-3x</strain>
    </source>
</reference>
<protein>
    <recommendedName>
        <fullName evidence="1">Phosphate import ATP-binding protein PstB</fullName>
        <ecNumber evidence="1">7.3.2.1</ecNumber>
    </recommendedName>
    <alternativeName>
        <fullName evidence="1">ABC phosphate transporter</fullName>
    </alternativeName>
    <alternativeName>
        <fullName evidence="1">Phosphate-transporting ATPase</fullName>
    </alternativeName>
</protein>
<feature type="chain" id="PRO_0000092877" description="Phosphate import ATP-binding protein PstB">
    <location>
        <begin position="1"/>
        <end position="269"/>
    </location>
</feature>
<feature type="domain" description="ABC transporter" evidence="1">
    <location>
        <begin position="22"/>
        <end position="264"/>
    </location>
</feature>
<feature type="binding site" evidence="1">
    <location>
        <begin position="55"/>
        <end position="62"/>
    </location>
    <ligand>
        <name>ATP</name>
        <dbReference type="ChEBI" id="CHEBI:30616"/>
    </ligand>
</feature>
<proteinExistence type="inferred from homology"/>
<dbReference type="EC" id="7.3.2.1" evidence="1"/>
<dbReference type="EMBL" id="AY198133">
    <property type="protein sequence ID" value="AAP58950.1"/>
    <property type="molecule type" value="Genomic_DNA"/>
</dbReference>
<dbReference type="SMR" id="Q6XYT0"/>
<dbReference type="GO" id="GO:0005886">
    <property type="term" value="C:plasma membrane"/>
    <property type="evidence" value="ECO:0007669"/>
    <property type="project" value="UniProtKB-SubCell"/>
</dbReference>
<dbReference type="GO" id="GO:0005524">
    <property type="term" value="F:ATP binding"/>
    <property type="evidence" value="ECO:0007669"/>
    <property type="project" value="UniProtKB-KW"/>
</dbReference>
<dbReference type="GO" id="GO:0016887">
    <property type="term" value="F:ATP hydrolysis activity"/>
    <property type="evidence" value="ECO:0007669"/>
    <property type="project" value="InterPro"/>
</dbReference>
<dbReference type="GO" id="GO:0015415">
    <property type="term" value="F:ATPase-coupled phosphate ion transmembrane transporter activity"/>
    <property type="evidence" value="ECO:0007669"/>
    <property type="project" value="UniProtKB-EC"/>
</dbReference>
<dbReference type="GO" id="GO:0035435">
    <property type="term" value="P:phosphate ion transmembrane transport"/>
    <property type="evidence" value="ECO:0007669"/>
    <property type="project" value="InterPro"/>
</dbReference>
<dbReference type="CDD" id="cd03260">
    <property type="entry name" value="ABC_PstB_phosphate_transporter"/>
    <property type="match status" value="1"/>
</dbReference>
<dbReference type="Gene3D" id="3.40.50.300">
    <property type="entry name" value="P-loop containing nucleotide triphosphate hydrolases"/>
    <property type="match status" value="1"/>
</dbReference>
<dbReference type="InterPro" id="IPR003593">
    <property type="entry name" value="AAA+_ATPase"/>
</dbReference>
<dbReference type="InterPro" id="IPR003439">
    <property type="entry name" value="ABC_transporter-like_ATP-bd"/>
</dbReference>
<dbReference type="InterPro" id="IPR017871">
    <property type="entry name" value="ABC_transporter-like_CS"/>
</dbReference>
<dbReference type="InterPro" id="IPR027417">
    <property type="entry name" value="P-loop_NTPase"/>
</dbReference>
<dbReference type="InterPro" id="IPR005670">
    <property type="entry name" value="PstB-like"/>
</dbReference>
<dbReference type="NCBIfam" id="TIGR00972">
    <property type="entry name" value="3a0107s01c2"/>
    <property type="match status" value="1"/>
</dbReference>
<dbReference type="PANTHER" id="PTHR43423">
    <property type="entry name" value="ABC TRANSPORTER I FAMILY MEMBER 17"/>
    <property type="match status" value="1"/>
</dbReference>
<dbReference type="PANTHER" id="PTHR43423:SF1">
    <property type="entry name" value="ABC TRANSPORTER I FAMILY MEMBER 17"/>
    <property type="match status" value="1"/>
</dbReference>
<dbReference type="Pfam" id="PF00005">
    <property type="entry name" value="ABC_tran"/>
    <property type="match status" value="1"/>
</dbReference>
<dbReference type="SMART" id="SM00382">
    <property type="entry name" value="AAA"/>
    <property type="match status" value="1"/>
</dbReference>
<dbReference type="SUPFAM" id="SSF52540">
    <property type="entry name" value="P-loop containing nucleoside triphosphate hydrolases"/>
    <property type="match status" value="1"/>
</dbReference>
<dbReference type="PROSITE" id="PS00211">
    <property type="entry name" value="ABC_TRANSPORTER_1"/>
    <property type="match status" value="1"/>
</dbReference>
<dbReference type="PROSITE" id="PS50893">
    <property type="entry name" value="ABC_TRANSPORTER_2"/>
    <property type="match status" value="1"/>
</dbReference>
<dbReference type="PROSITE" id="PS51238">
    <property type="entry name" value="PSTB"/>
    <property type="match status" value="1"/>
</dbReference>
<organism>
    <name type="scientific">Spiroplasma kunkelii</name>
    <dbReference type="NCBI Taxonomy" id="47834"/>
    <lineage>
        <taxon>Bacteria</taxon>
        <taxon>Bacillati</taxon>
        <taxon>Mycoplasmatota</taxon>
        <taxon>Mollicutes</taxon>
        <taxon>Entomoplasmatales</taxon>
        <taxon>Spiroplasmataceae</taxon>
        <taxon>Spiroplasma</taxon>
    </lineage>
</organism>
<comment type="function">
    <text evidence="1">Part of the ABC transporter complex PstSACB involved in phosphate import. Responsible for energy coupling to the transport system.</text>
</comment>
<comment type="catalytic activity">
    <reaction evidence="1">
        <text>phosphate(out) + ATP + H2O = ADP + 2 phosphate(in) + H(+)</text>
        <dbReference type="Rhea" id="RHEA:24440"/>
        <dbReference type="ChEBI" id="CHEBI:15377"/>
        <dbReference type="ChEBI" id="CHEBI:15378"/>
        <dbReference type="ChEBI" id="CHEBI:30616"/>
        <dbReference type="ChEBI" id="CHEBI:43474"/>
        <dbReference type="ChEBI" id="CHEBI:456216"/>
        <dbReference type="EC" id="7.3.2.1"/>
    </reaction>
</comment>
<comment type="subunit">
    <text evidence="1">The complex is composed of two ATP-binding proteins (PstB), two transmembrane proteins (PstC and PstA) and a solute-binding protein (PstS).</text>
</comment>
<comment type="subcellular location">
    <subcellularLocation>
        <location evidence="1">Cell membrane</location>
        <topology evidence="1">Peripheral membrane protein</topology>
    </subcellularLocation>
</comment>
<comment type="similarity">
    <text evidence="1">Belongs to the ABC transporter superfamily. Phosphate importer (TC 3.A.1.7) family.</text>
</comment>
<accession>Q6XYT0</accession>
<gene>
    <name evidence="1" type="primary">pstB</name>
</gene>
<sequence>MDPKVIIKNPTFDSSDNNPDLIKVKNVDFFYKGNKRALFNISMKIKEHTVTAFIGSSGSGKSTLLRLFNRMNDVEPKSIFKGEILINGKNIYSPETDIVKLRTDIGMVFQKPSPFPMSIYDNVAYGPRNQGVRDRKLVNSIVVENLKRAALWDEVKDNLRDSAFALSGGQQQRLCIARAIAMKPKILLMDEPTSALDPISTSKIEELITQLKKDFTIVLVTHHMQQAARVADYTAFFAKGKLIEYNKTKIIFSRPANKKTEDYITGRFE</sequence>
<keyword id="KW-0067">ATP-binding</keyword>
<keyword id="KW-1003">Cell membrane</keyword>
<keyword id="KW-0472">Membrane</keyword>
<keyword id="KW-0547">Nucleotide-binding</keyword>
<keyword id="KW-0592">Phosphate transport</keyword>
<keyword id="KW-1278">Translocase</keyword>
<keyword id="KW-0813">Transport</keyword>